<comment type="function">
    <text evidence="1 2">Catalytic subunit of pyrophosphate--fructose 6-phosphate 1-phosphotransferase. Catalyzes the phosphorylation of D-fructose 6-phosphate, the first committing step of glycolysis. Uses inorganic phosphate (PPi) as phosphoryl donor instead of ATP like common ATP-dependent phosphofructokinases (ATP-PFKs), which renders the reaction reversible, and can thus function both in glycolysis and gluconeogenesis.</text>
</comment>
<comment type="catalytic activity">
    <reaction evidence="1">
        <text>beta-D-fructose 6-phosphate + diphosphate = beta-D-fructose 1,6-bisphosphate + phosphate + H(+)</text>
        <dbReference type="Rhea" id="RHEA:13613"/>
        <dbReference type="ChEBI" id="CHEBI:15378"/>
        <dbReference type="ChEBI" id="CHEBI:32966"/>
        <dbReference type="ChEBI" id="CHEBI:33019"/>
        <dbReference type="ChEBI" id="CHEBI:43474"/>
        <dbReference type="ChEBI" id="CHEBI:57634"/>
        <dbReference type="EC" id="2.7.1.90"/>
    </reaction>
</comment>
<comment type="cofactor">
    <cofactor evidence="1">
        <name>Mg(2+)</name>
        <dbReference type="ChEBI" id="CHEBI:18420"/>
    </cofactor>
</comment>
<comment type="activity regulation">
    <text evidence="1">Allosterically activated by fructose 2,6-bisphosphate.</text>
</comment>
<comment type="pathway">
    <text evidence="1">Carbohydrate degradation; glycolysis; D-glyceraldehyde 3-phosphate and glycerone phosphate from D-glucose: step 3/4.</text>
</comment>
<comment type="subunit">
    <text evidence="1">Tetramer of two alpha (regulatory) and two beta (catalytic) chains.</text>
</comment>
<comment type="subcellular location">
    <subcellularLocation>
        <location evidence="1">Cytoplasm</location>
    </subcellularLocation>
</comment>
<comment type="disruption phenotype">
    <text evidence="2">Retarded growth and reduced pyrophosphate--fructose 6-phosphate 1-phosphotransferase (PFP) activity.</text>
</comment>
<comment type="similarity">
    <text evidence="1">Belongs to the phosphofructokinase type A (PFKA) family. PPi-dependent PFK group II subfamily. Clade 'Long' sub-subfamily.</text>
</comment>
<comment type="sequence caution" evidence="3">
    <conflict type="erroneous gene model prediction">
        <sequence resource="EMBL-CDS" id="AAC17614"/>
    </conflict>
</comment>
<reference key="1">
    <citation type="journal article" date="2000" name="Nature">
        <title>Sequence and analysis of chromosome 1 of the plant Arabidopsis thaliana.</title>
        <authorList>
            <person name="Theologis A."/>
            <person name="Ecker J.R."/>
            <person name="Palm C.J."/>
            <person name="Federspiel N.A."/>
            <person name="Kaul S."/>
            <person name="White O."/>
            <person name="Alonso J."/>
            <person name="Altafi H."/>
            <person name="Araujo R."/>
            <person name="Bowman C.L."/>
            <person name="Brooks S.Y."/>
            <person name="Buehler E."/>
            <person name="Chan A."/>
            <person name="Chao Q."/>
            <person name="Chen H."/>
            <person name="Cheuk R.F."/>
            <person name="Chin C.W."/>
            <person name="Chung M.K."/>
            <person name="Conn L."/>
            <person name="Conway A.B."/>
            <person name="Conway A.R."/>
            <person name="Creasy T.H."/>
            <person name="Dewar K."/>
            <person name="Dunn P."/>
            <person name="Etgu P."/>
            <person name="Feldblyum T.V."/>
            <person name="Feng J.-D."/>
            <person name="Fong B."/>
            <person name="Fujii C.Y."/>
            <person name="Gill J.E."/>
            <person name="Goldsmith A.D."/>
            <person name="Haas B."/>
            <person name="Hansen N.F."/>
            <person name="Hughes B."/>
            <person name="Huizar L."/>
            <person name="Hunter J.L."/>
            <person name="Jenkins J."/>
            <person name="Johnson-Hopson C."/>
            <person name="Khan S."/>
            <person name="Khaykin E."/>
            <person name="Kim C.J."/>
            <person name="Koo H.L."/>
            <person name="Kremenetskaia I."/>
            <person name="Kurtz D.B."/>
            <person name="Kwan A."/>
            <person name="Lam B."/>
            <person name="Langin-Hooper S."/>
            <person name="Lee A."/>
            <person name="Lee J.M."/>
            <person name="Lenz C.A."/>
            <person name="Li J.H."/>
            <person name="Li Y.-P."/>
            <person name="Lin X."/>
            <person name="Liu S.X."/>
            <person name="Liu Z.A."/>
            <person name="Luros J.S."/>
            <person name="Maiti R."/>
            <person name="Marziali A."/>
            <person name="Militscher J."/>
            <person name="Miranda M."/>
            <person name="Nguyen M."/>
            <person name="Nierman W.C."/>
            <person name="Osborne B.I."/>
            <person name="Pai G."/>
            <person name="Peterson J."/>
            <person name="Pham P.K."/>
            <person name="Rizzo M."/>
            <person name="Rooney T."/>
            <person name="Rowley D."/>
            <person name="Sakano H."/>
            <person name="Salzberg S.L."/>
            <person name="Schwartz J.R."/>
            <person name="Shinn P."/>
            <person name="Southwick A.M."/>
            <person name="Sun H."/>
            <person name="Tallon L.J."/>
            <person name="Tambunga G."/>
            <person name="Toriumi M.J."/>
            <person name="Town C.D."/>
            <person name="Utterback T."/>
            <person name="Van Aken S."/>
            <person name="Vaysberg M."/>
            <person name="Vysotskaia V.S."/>
            <person name="Walker M."/>
            <person name="Wu D."/>
            <person name="Yu G."/>
            <person name="Fraser C.M."/>
            <person name="Venter J.C."/>
            <person name="Davis R.W."/>
        </authorList>
    </citation>
    <scope>NUCLEOTIDE SEQUENCE [LARGE SCALE GENOMIC DNA]</scope>
    <source>
        <strain>cv. Columbia</strain>
    </source>
</reference>
<reference key="2">
    <citation type="journal article" date="2017" name="Plant J.">
        <title>Araport11: a complete reannotation of the Arabidopsis thaliana reference genome.</title>
        <authorList>
            <person name="Cheng C.Y."/>
            <person name="Krishnakumar V."/>
            <person name="Chan A.P."/>
            <person name="Thibaud-Nissen F."/>
            <person name="Schobel S."/>
            <person name="Town C.D."/>
        </authorList>
    </citation>
    <scope>GENOME REANNOTATION</scope>
    <source>
        <strain>cv. Columbia</strain>
    </source>
</reference>
<reference key="3">
    <citation type="journal article" date="2003" name="Science">
        <title>Empirical analysis of transcriptional activity in the Arabidopsis genome.</title>
        <authorList>
            <person name="Yamada K."/>
            <person name="Lim J."/>
            <person name="Dale J.M."/>
            <person name="Chen H."/>
            <person name="Shinn P."/>
            <person name="Palm C.J."/>
            <person name="Southwick A.M."/>
            <person name="Wu H.C."/>
            <person name="Kim C.J."/>
            <person name="Nguyen M."/>
            <person name="Pham P.K."/>
            <person name="Cheuk R.F."/>
            <person name="Karlin-Newmann G."/>
            <person name="Liu S.X."/>
            <person name="Lam B."/>
            <person name="Sakano H."/>
            <person name="Wu T."/>
            <person name="Yu G."/>
            <person name="Miranda M."/>
            <person name="Quach H.L."/>
            <person name="Tripp M."/>
            <person name="Chang C.H."/>
            <person name="Lee J.M."/>
            <person name="Toriumi M.J."/>
            <person name="Chan M.M."/>
            <person name="Tang C.C."/>
            <person name="Onodera C.S."/>
            <person name="Deng J.M."/>
            <person name="Akiyama K."/>
            <person name="Ansari Y."/>
            <person name="Arakawa T."/>
            <person name="Banh J."/>
            <person name="Banno F."/>
            <person name="Bowser L."/>
            <person name="Brooks S.Y."/>
            <person name="Carninci P."/>
            <person name="Chao Q."/>
            <person name="Choy N."/>
            <person name="Enju A."/>
            <person name="Goldsmith A.D."/>
            <person name="Gurjal M."/>
            <person name="Hansen N.F."/>
            <person name="Hayashizaki Y."/>
            <person name="Johnson-Hopson C."/>
            <person name="Hsuan V.W."/>
            <person name="Iida K."/>
            <person name="Karnes M."/>
            <person name="Khan S."/>
            <person name="Koesema E."/>
            <person name="Ishida J."/>
            <person name="Jiang P.X."/>
            <person name="Jones T."/>
            <person name="Kawai J."/>
            <person name="Kamiya A."/>
            <person name="Meyers C."/>
            <person name="Nakajima M."/>
            <person name="Narusaka M."/>
            <person name="Seki M."/>
            <person name="Sakurai T."/>
            <person name="Satou M."/>
            <person name="Tamse R."/>
            <person name="Vaysberg M."/>
            <person name="Wallender E.K."/>
            <person name="Wong C."/>
            <person name="Yamamura Y."/>
            <person name="Yuan S."/>
            <person name="Shinozaki K."/>
            <person name="Davis R.W."/>
            <person name="Theologis A."/>
            <person name="Ecker J.R."/>
        </authorList>
    </citation>
    <scope>NUCLEOTIDE SEQUENCE [LARGE SCALE MRNA]</scope>
    <source>
        <strain>cv. Columbia</strain>
    </source>
</reference>
<reference key="4">
    <citation type="journal article" date="2004" name="Trends Plant Sci.">
        <title>Fructose-2,6-bisphosphate: a traffic signal in plant metabolism.</title>
        <authorList>
            <person name="Nielsen T.H."/>
            <person name="Rung J.H."/>
            <person name="Villadsen D."/>
        </authorList>
    </citation>
    <scope>REVIEW</scope>
</reference>
<reference key="5">
    <citation type="journal article" date="2009" name="J. Proteomics">
        <title>Phosphoproteomic analysis of nuclei-enriched fractions from Arabidopsis thaliana.</title>
        <authorList>
            <person name="Jones A.M.E."/>
            <person name="MacLean D."/>
            <person name="Studholme D.J."/>
            <person name="Serna-Sanz A."/>
            <person name="Andreasson E."/>
            <person name="Rathjen J.P."/>
            <person name="Peck S.C."/>
        </authorList>
    </citation>
    <scope>PHOSPHORYLATION [LARGE SCALE ANALYSIS] AT SER-16</scope>
    <scope>IDENTIFICATION BY MASS SPECTROMETRY [LARGE SCALE ANALYSIS]</scope>
    <source>
        <strain>cv. Columbia</strain>
    </source>
</reference>
<reference key="6">
    <citation type="journal article" date="2009" name="Mol. Cells">
        <title>Altered expression of pyrophosphate: fructose-6-phosphate 1-phosphotransferase affects the growth of transgenic Arabidopsis plants.</title>
        <authorList>
            <person name="Lim H."/>
            <person name="Cho M.-H."/>
            <person name="Jeon J.-S."/>
            <person name="Bhoo S.H."/>
            <person name="Kwon Y.-K."/>
            <person name="Hahn T.-R."/>
        </authorList>
    </citation>
    <scope>FUNCTION</scope>
    <scope>DISRUPTION PHENOTYPE</scope>
    <scope>GENE FAMILY</scope>
    <scope>NOMENCLATURE</scope>
    <source>
        <strain>cv. Columbia</strain>
    </source>
</reference>
<reference key="7">
    <citation type="journal article" date="2009" name="Plant Physiol.">
        <title>Large-scale Arabidopsis phosphoproteome profiling reveals novel chloroplast kinase substrates and phosphorylation networks.</title>
        <authorList>
            <person name="Reiland S."/>
            <person name="Messerli G."/>
            <person name="Baerenfaller K."/>
            <person name="Gerrits B."/>
            <person name="Endler A."/>
            <person name="Grossmann J."/>
            <person name="Gruissem W."/>
            <person name="Baginsky S."/>
        </authorList>
    </citation>
    <scope>PHOSPHORYLATION [LARGE SCALE ANALYSIS] AT SER-16</scope>
    <scope>IDENTIFICATION BY MASS SPECTROMETRY [LARGE SCALE ANALYSIS]</scope>
</reference>
<name>PFPB1_ARATH</name>
<proteinExistence type="evidence at protein level"/>
<organism>
    <name type="scientific">Arabidopsis thaliana</name>
    <name type="common">Mouse-ear cress</name>
    <dbReference type="NCBI Taxonomy" id="3702"/>
    <lineage>
        <taxon>Eukaryota</taxon>
        <taxon>Viridiplantae</taxon>
        <taxon>Streptophyta</taxon>
        <taxon>Embryophyta</taxon>
        <taxon>Tracheophyta</taxon>
        <taxon>Spermatophyta</taxon>
        <taxon>Magnoliopsida</taxon>
        <taxon>eudicotyledons</taxon>
        <taxon>Gunneridae</taxon>
        <taxon>Pentapetalae</taxon>
        <taxon>rosids</taxon>
        <taxon>malvids</taxon>
        <taxon>Brassicales</taxon>
        <taxon>Brassicaceae</taxon>
        <taxon>Camelineae</taxon>
        <taxon>Arabidopsis</taxon>
    </lineage>
</organism>
<sequence>MAPALAVTRDLTAVGSPENAPAKGRASVYSEVQSSRINNTLPLPSVLKGAFKIVEGPASSAAGNPDEIAKLFPGLYGQPSVAVVPDQDAPSSAPKLKIGVVLSGGQAPGGHNVISGLFDYLQERAKGSTFYGFKGGPAGIMKCKYVELNAEYIQPYRNQGGFDMICSGRDKIETPDQFKQAEETAKKLDLDGLVVIGGDDSNTNACLLAENFRSKNLKTRVIGCPKTIDGDLKCKEVPTSFGFDTACKIYSEMIGNVMIDARSTGKYYHFVRLMGRAASHITLECALQTHPNITIIGEEVSAQKQTLKNVTDYMVDVICKRAELGYNYGVILIPEGLIDFIPEVQELIAELNEILANEVVDENGLWKKKLTEQSLKLFDLLPEAIQEQLMLERDPHGNVQVAKIETEKMLIQMVETELEKRKQAGAYKGQFMGQSHFFGYEGRCGLPTNFDATYCYALGYGAGVLLNSGKTGLISSVGNLAAPVEEWTVGGTALTALMDVERRHGKFKPVIKKAMVELEGAPFKKFASLREEWALKNRYISPGPIQFTGPGSDSLSHTLLLELGAQ</sequence>
<feature type="chain" id="PRO_0000420419" description="Pyrophosphate--fructose 6-phosphate 1-phosphotransferase subunit beta 1">
    <location>
        <begin position="1"/>
        <end position="566"/>
    </location>
</feature>
<feature type="active site" description="Proton acceptor" evidence="1">
    <location>
        <position position="229"/>
    </location>
</feature>
<feature type="binding site" evidence="1">
    <location>
        <position position="105"/>
    </location>
    <ligand>
        <name>diphosphate</name>
        <dbReference type="ChEBI" id="CHEBI:33019"/>
    </ligand>
</feature>
<feature type="binding site" evidence="1">
    <location>
        <position position="199"/>
    </location>
    <ligand>
        <name>Mg(2+)</name>
        <dbReference type="ChEBI" id="CHEBI:18420"/>
        <note>catalytic</note>
    </ligand>
</feature>
<feature type="binding site" description="in other chain" evidence="1">
    <location>
        <begin position="227"/>
        <end position="229"/>
    </location>
    <ligand>
        <name>substrate</name>
        <note>ligand shared between dimeric partners</note>
    </ligand>
</feature>
<feature type="binding site" evidence="1">
    <location>
        <begin position="266"/>
        <end position="267"/>
    </location>
    <ligand>
        <name>substrate</name>
        <note>ligand shared between dimeric partners</note>
    </ligand>
</feature>
<feature type="binding site" description="in other chain" evidence="1">
    <location>
        <begin position="274"/>
        <end position="276"/>
    </location>
    <ligand>
        <name>substrate</name>
        <note>ligand shared between dimeric partners</note>
    </ligand>
</feature>
<feature type="binding site" description="in other chain" evidence="1">
    <location>
        <position position="335"/>
    </location>
    <ligand>
        <name>substrate</name>
        <note>ligand shared between dimeric partners</note>
    </ligand>
</feature>
<feature type="binding site" description="in other chain" evidence="1">
    <location>
        <begin position="440"/>
        <end position="443"/>
    </location>
    <ligand>
        <name>substrate</name>
        <note>ligand shared between dimeric partners</note>
    </ligand>
</feature>
<feature type="site" description="Important for catalytic activity and substrate specificity; stabilizes the transition state when the phosphoryl donor is PPi; prevents ATP from binding by mimicking the alpha-phosphate group of ATP" evidence="1">
    <location>
        <position position="200"/>
    </location>
</feature>
<feature type="site" description="Important for catalytic activity; stabilizes the transition state when the phosphoryl donor is PPi" evidence="1">
    <location>
        <position position="226"/>
    </location>
</feature>
<feature type="modified residue" description="Phosphoserine" evidence="4 5">
    <location>
        <position position="16"/>
    </location>
</feature>
<protein>
    <recommendedName>
        <fullName evidence="1">Pyrophosphate--fructose 6-phosphate 1-phosphotransferase subunit beta 1</fullName>
        <shortName evidence="1">PFP 1</shortName>
        <ecNumber evidence="1">2.7.1.90</ecNumber>
    </recommendedName>
    <alternativeName>
        <fullName evidence="1">6-phosphofructokinase, pyrophosphate dependent 1</fullName>
    </alternativeName>
    <alternativeName>
        <fullName evidence="1">PPi-PFK 1</fullName>
    </alternativeName>
    <alternativeName>
        <fullName evidence="1">Pyrophosphate-dependent 6-phosphofructose-1-kinase 1</fullName>
    </alternativeName>
</protein>
<gene>
    <name evidence="1" type="primary">PFP-BETA1</name>
    <name type="ordered locus">At1g12000</name>
    <name type="ORF">F12F1.13</name>
</gene>
<dbReference type="EC" id="2.7.1.90" evidence="1"/>
<dbReference type="EMBL" id="AC002131">
    <property type="protein sequence ID" value="AAC17614.1"/>
    <property type="status" value="ALT_SEQ"/>
    <property type="molecule type" value="Genomic_DNA"/>
</dbReference>
<dbReference type="EMBL" id="CP002684">
    <property type="protein sequence ID" value="AEE28825.1"/>
    <property type="molecule type" value="Genomic_DNA"/>
</dbReference>
<dbReference type="EMBL" id="AY062473">
    <property type="protein sequence ID" value="AAL32551.1"/>
    <property type="molecule type" value="mRNA"/>
</dbReference>
<dbReference type="EMBL" id="AY093260">
    <property type="protein sequence ID" value="AAM13259.1"/>
    <property type="molecule type" value="mRNA"/>
</dbReference>
<dbReference type="PIR" id="A86255">
    <property type="entry name" value="A86255"/>
</dbReference>
<dbReference type="RefSeq" id="NP_172664.1">
    <property type="nucleotide sequence ID" value="NM_101072.4"/>
</dbReference>
<dbReference type="SMR" id="Q8W4M5"/>
<dbReference type="BioGRID" id="22992">
    <property type="interactions" value="5"/>
</dbReference>
<dbReference type="FunCoup" id="Q8W4M5">
    <property type="interactions" value="842"/>
</dbReference>
<dbReference type="IntAct" id="Q8W4M5">
    <property type="interactions" value="1"/>
</dbReference>
<dbReference type="STRING" id="3702.Q8W4M5"/>
<dbReference type="iPTMnet" id="Q8W4M5"/>
<dbReference type="PaxDb" id="3702-AT1G12000.1"/>
<dbReference type="ProteomicsDB" id="235115"/>
<dbReference type="EnsemblPlants" id="AT1G12000.1">
    <property type="protein sequence ID" value="AT1G12000.1"/>
    <property type="gene ID" value="AT1G12000"/>
</dbReference>
<dbReference type="GeneID" id="837752"/>
<dbReference type="Gramene" id="AT1G12000.1">
    <property type="protein sequence ID" value="AT1G12000.1"/>
    <property type="gene ID" value="AT1G12000"/>
</dbReference>
<dbReference type="KEGG" id="ath:AT1G12000"/>
<dbReference type="Araport" id="AT1G12000"/>
<dbReference type="TAIR" id="AT1G12000"/>
<dbReference type="eggNOG" id="KOG2440">
    <property type="taxonomic scope" value="Eukaryota"/>
</dbReference>
<dbReference type="HOGENOM" id="CLU_022288_0_1_1"/>
<dbReference type="InParanoid" id="Q8W4M5"/>
<dbReference type="OMA" id="SAKKYWH"/>
<dbReference type="OrthoDB" id="537915at2759"/>
<dbReference type="PhylomeDB" id="Q8W4M5"/>
<dbReference type="BioCyc" id="ARA:AT1G12000-MONOMER"/>
<dbReference type="UniPathway" id="UPA00109">
    <property type="reaction ID" value="UER00182"/>
</dbReference>
<dbReference type="PRO" id="PR:Q8W4M5"/>
<dbReference type="Proteomes" id="UP000006548">
    <property type="component" value="Chromosome 1"/>
</dbReference>
<dbReference type="ExpressionAtlas" id="Q8W4M5">
    <property type="expression patterns" value="baseline and differential"/>
</dbReference>
<dbReference type="GO" id="GO:0005829">
    <property type="term" value="C:cytosol"/>
    <property type="evidence" value="ECO:0007005"/>
    <property type="project" value="TAIR"/>
</dbReference>
<dbReference type="GO" id="GO:0009505">
    <property type="term" value="C:plant-type cell wall"/>
    <property type="evidence" value="ECO:0007005"/>
    <property type="project" value="TAIR"/>
</dbReference>
<dbReference type="GO" id="GO:0003872">
    <property type="term" value="F:6-phosphofructokinase activity"/>
    <property type="evidence" value="ECO:0007669"/>
    <property type="project" value="UniProtKB-UniRule"/>
</dbReference>
<dbReference type="GO" id="GO:0005524">
    <property type="term" value="F:ATP binding"/>
    <property type="evidence" value="ECO:0007669"/>
    <property type="project" value="InterPro"/>
</dbReference>
<dbReference type="GO" id="GO:0047334">
    <property type="term" value="F:diphosphate-fructose-6-phosphate 1-phosphotransferase activity"/>
    <property type="evidence" value="ECO:0000315"/>
    <property type="project" value="TAIR"/>
</dbReference>
<dbReference type="GO" id="GO:0046872">
    <property type="term" value="F:metal ion binding"/>
    <property type="evidence" value="ECO:0007669"/>
    <property type="project" value="UniProtKB-KW"/>
</dbReference>
<dbReference type="GO" id="GO:0006002">
    <property type="term" value="P:fructose 6-phosphate metabolic process"/>
    <property type="evidence" value="ECO:0007669"/>
    <property type="project" value="InterPro"/>
</dbReference>
<dbReference type="GO" id="GO:0015979">
    <property type="term" value="P:photosynthesis"/>
    <property type="evidence" value="ECO:0000315"/>
    <property type="project" value="TAIR"/>
</dbReference>
<dbReference type="CDD" id="cd00765">
    <property type="entry name" value="Pyrophosphate_PFK"/>
    <property type="match status" value="1"/>
</dbReference>
<dbReference type="FunFam" id="1.10.10.480:FF:000002">
    <property type="entry name" value="Pyrophosphate--fructose 6-phosphate 1-phosphotransferase subunit beta"/>
    <property type="match status" value="1"/>
</dbReference>
<dbReference type="Gene3D" id="3.40.50.450">
    <property type="match status" value="1"/>
</dbReference>
<dbReference type="Gene3D" id="3.40.50.460">
    <property type="entry name" value="Phosphofructokinase domain"/>
    <property type="match status" value="1"/>
</dbReference>
<dbReference type="Gene3D" id="1.10.10.480">
    <property type="entry name" value="Phosphofructokinase, domain 3"/>
    <property type="match status" value="1"/>
</dbReference>
<dbReference type="HAMAP" id="MF_01980">
    <property type="entry name" value="Phosphofructokinase_II_Long"/>
    <property type="match status" value="1"/>
</dbReference>
<dbReference type="InterPro" id="IPR022953">
    <property type="entry name" value="ATP_PFK"/>
</dbReference>
<dbReference type="InterPro" id="IPR011183">
    <property type="entry name" value="PfpB_PPi_PFK"/>
</dbReference>
<dbReference type="InterPro" id="IPR000023">
    <property type="entry name" value="Phosphofructokinase_dom"/>
</dbReference>
<dbReference type="InterPro" id="IPR035966">
    <property type="entry name" value="PKF_sf"/>
</dbReference>
<dbReference type="NCBIfam" id="TIGR02477">
    <property type="entry name" value="PFKA_PPi"/>
    <property type="match status" value="1"/>
</dbReference>
<dbReference type="NCBIfam" id="NF005482">
    <property type="entry name" value="PRK07085.1"/>
    <property type="match status" value="1"/>
</dbReference>
<dbReference type="PANTHER" id="PTHR43650">
    <property type="entry name" value="PYROPHOSPHATE--FRUCTOSE 6-PHOSPHATE 1-PHOSPHOTRANSFERASE"/>
    <property type="match status" value="1"/>
</dbReference>
<dbReference type="PANTHER" id="PTHR43650:SF29">
    <property type="entry name" value="PYROPHOSPHATE--FRUCTOSE 6-PHOSPHATE 1-PHOSPHOTRANSFERASE SUBUNIT BETA 1"/>
    <property type="match status" value="1"/>
</dbReference>
<dbReference type="Pfam" id="PF00365">
    <property type="entry name" value="PFK"/>
    <property type="match status" value="1"/>
</dbReference>
<dbReference type="PIRSF" id="PIRSF005677">
    <property type="entry name" value="PPi_PFK_PfpB"/>
    <property type="match status" value="1"/>
</dbReference>
<dbReference type="PRINTS" id="PR00476">
    <property type="entry name" value="PHFRCTKINASE"/>
</dbReference>
<dbReference type="SUPFAM" id="SSF53784">
    <property type="entry name" value="Phosphofructokinase"/>
    <property type="match status" value="1"/>
</dbReference>
<accession>Q8W4M5</accession>
<accession>O65379</accession>
<evidence type="ECO:0000255" key="1">
    <source>
        <dbReference type="HAMAP-Rule" id="MF_03185"/>
    </source>
</evidence>
<evidence type="ECO:0000269" key="2">
    <source>
    </source>
</evidence>
<evidence type="ECO:0000305" key="3"/>
<evidence type="ECO:0007744" key="4">
    <source>
    </source>
</evidence>
<evidence type="ECO:0007744" key="5">
    <source>
    </source>
</evidence>
<keyword id="KW-0021">Allosteric enzyme</keyword>
<keyword id="KW-0963">Cytoplasm</keyword>
<keyword id="KW-0324">Glycolysis</keyword>
<keyword id="KW-0418">Kinase</keyword>
<keyword id="KW-0460">Magnesium</keyword>
<keyword id="KW-0479">Metal-binding</keyword>
<keyword id="KW-0597">Phosphoprotein</keyword>
<keyword id="KW-1185">Reference proteome</keyword>
<keyword id="KW-0808">Transferase</keyword>